<proteinExistence type="inferred from homology"/>
<dbReference type="EC" id="4.1.1.37" evidence="1"/>
<dbReference type="EMBL" id="CP000783">
    <property type="protein sequence ID" value="ABU78880.1"/>
    <property type="molecule type" value="Genomic_DNA"/>
</dbReference>
<dbReference type="RefSeq" id="WP_012126006.1">
    <property type="nucleotide sequence ID" value="NC_009778.1"/>
</dbReference>
<dbReference type="SMR" id="A7MJ78"/>
<dbReference type="KEGG" id="esa:ESA_03676"/>
<dbReference type="PATRIC" id="fig|290339.8.peg.3273"/>
<dbReference type="HOGENOM" id="CLU_040933_0_0_6"/>
<dbReference type="UniPathway" id="UPA00251">
    <property type="reaction ID" value="UER00321"/>
</dbReference>
<dbReference type="Proteomes" id="UP000000260">
    <property type="component" value="Chromosome"/>
</dbReference>
<dbReference type="GO" id="GO:0005829">
    <property type="term" value="C:cytosol"/>
    <property type="evidence" value="ECO:0007669"/>
    <property type="project" value="TreeGrafter"/>
</dbReference>
<dbReference type="GO" id="GO:0004853">
    <property type="term" value="F:uroporphyrinogen decarboxylase activity"/>
    <property type="evidence" value="ECO:0007669"/>
    <property type="project" value="UniProtKB-UniRule"/>
</dbReference>
<dbReference type="GO" id="GO:0019353">
    <property type="term" value="P:protoporphyrinogen IX biosynthetic process from glutamate"/>
    <property type="evidence" value="ECO:0007669"/>
    <property type="project" value="TreeGrafter"/>
</dbReference>
<dbReference type="CDD" id="cd00717">
    <property type="entry name" value="URO-D"/>
    <property type="match status" value="1"/>
</dbReference>
<dbReference type="FunFam" id="3.20.20.210:FF:000001">
    <property type="entry name" value="Uroporphyrinogen decarboxylase"/>
    <property type="match status" value="1"/>
</dbReference>
<dbReference type="Gene3D" id="3.20.20.210">
    <property type="match status" value="1"/>
</dbReference>
<dbReference type="HAMAP" id="MF_00218">
    <property type="entry name" value="URO_D"/>
    <property type="match status" value="1"/>
</dbReference>
<dbReference type="InterPro" id="IPR038071">
    <property type="entry name" value="UROD/MetE-like_sf"/>
</dbReference>
<dbReference type="InterPro" id="IPR006361">
    <property type="entry name" value="Uroporphyrinogen_deCO2ase_HemE"/>
</dbReference>
<dbReference type="InterPro" id="IPR000257">
    <property type="entry name" value="Uroporphyrinogen_deCOase"/>
</dbReference>
<dbReference type="NCBIfam" id="TIGR01464">
    <property type="entry name" value="hemE"/>
    <property type="match status" value="1"/>
</dbReference>
<dbReference type="PANTHER" id="PTHR21091">
    <property type="entry name" value="METHYLTETRAHYDROFOLATE:HOMOCYSTEINE METHYLTRANSFERASE RELATED"/>
    <property type="match status" value="1"/>
</dbReference>
<dbReference type="PANTHER" id="PTHR21091:SF169">
    <property type="entry name" value="UROPORPHYRINOGEN DECARBOXYLASE"/>
    <property type="match status" value="1"/>
</dbReference>
<dbReference type="Pfam" id="PF01208">
    <property type="entry name" value="URO-D"/>
    <property type="match status" value="1"/>
</dbReference>
<dbReference type="SUPFAM" id="SSF51726">
    <property type="entry name" value="UROD/MetE-like"/>
    <property type="match status" value="1"/>
</dbReference>
<dbReference type="PROSITE" id="PS00906">
    <property type="entry name" value="UROD_1"/>
    <property type="match status" value="1"/>
</dbReference>
<dbReference type="PROSITE" id="PS00907">
    <property type="entry name" value="UROD_2"/>
    <property type="match status" value="1"/>
</dbReference>
<gene>
    <name evidence="1" type="primary">hemE</name>
    <name type="ordered locus">ESA_03676</name>
</gene>
<protein>
    <recommendedName>
        <fullName evidence="1">Uroporphyrinogen decarboxylase</fullName>
        <shortName evidence="1">UPD</shortName>
        <shortName evidence="1">URO-D</shortName>
        <ecNumber evidence="1">4.1.1.37</ecNumber>
    </recommendedName>
</protein>
<sequence length="354" mass="39190">MTELKNDRYLRALQRQPVDVTPVWMMRQAGRYLPEYKATRAQAGDFMSLCKNAELACEVTLQPLRRYPLDAAILFSDILTIPDAMGLGLYFEAGEGPRFTSPITGKADVEKLPVPDPEQELGYVMNAVRTIRRELKGEVPLIGFSGSPWTLATYMVEGGSSKAFTVIKKMMYAESQTLHLLLDKLAKSVTLYLNAQIRAGAQSVMIFDTWGGVLTGRDYQQFSLYYMHKIVDGLLRENEGRRVPVTLFTKGGGQWLEAIAETGCDALGLDWTTDIADARRRVGHKVALQGNMDPSMLYASPARIEEEVASILAGFGNGEGHVFNLGHGIHQDVPPEHAGAFVEAVHRLSAPYHL</sequence>
<accession>A7MJ78</accession>
<comment type="function">
    <text evidence="1">Catalyzes the decarboxylation of four acetate groups of uroporphyrinogen-III to yield coproporphyrinogen-III.</text>
</comment>
<comment type="catalytic activity">
    <reaction evidence="1">
        <text>uroporphyrinogen III + 4 H(+) = coproporphyrinogen III + 4 CO2</text>
        <dbReference type="Rhea" id="RHEA:19865"/>
        <dbReference type="ChEBI" id="CHEBI:15378"/>
        <dbReference type="ChEBI" id="CHEBI:16526"/>
        <dbReference type="ChEBI" id="CHEBI:57308"/>
        <dbReference type="ChEBI" id="CHEBI:57309"/>
        <dbReference type="EC" id="4.1.1.37"/>
    </reaction>
</comment>
<comment type="pathway">
    <text evidence="1">Porphyrin-containing compound metabolism; protoporphyrin-IX biosynthesis; coproporphyrinogen-III from 5-aminolevulinate: step 4/4.</text>
</comment>
<comment type="subunit">
    <text evidence="1">Homodimer.</text>
</comment>
<comment type="subcellular location">
    <subcellularLocation>
        <location evidence="1">Cytoplasm</location>
    </subcellularLocation>
</comment>
<comment type="similarity">
    <text evidence="1">Belongs to the uroporphyrinogen decarboxylase family.</text>
</comment>
<reference key="1">
    <citation type="journal article" date="2010" name="PLoS ONE">
        <title>Genome sequence of Cronobacter sakazakii BAA-894 and comparative genomic hybridization analysis with other Cronobacter species.</title>
        <authorList>
            <person name="Kucerova E."/>
            <person name="Clifton S.W."/>
            <person name="Xia X.Q."/>
            <person name="Long F."/>
            <person name="Porwollik S."/>
            <person name="Fulton L."/>
            <person name="Fronick C."/>
            <person name="Minx P."/>
            <person name="Kyung K."/>
            <person name="Warren W."/>
            <person name="Fulton R."/>
            <person name="Feng D."/>
            <person name="Wollam A."/>
            <person name="Shah N."/>
            <person name="Bhonagiri V."/>
            <person name="Nash W.E."/>
            <person name="Hallsworth-Pepin K."/>
            <person name="Wilson R.K."/>
            <person name="McClelland M."/>
            <person name="Forsythe S.J."/>
        </authorList>
    </citation>
    <scope>NUCLEOTIDE SEQUENCE [LARGE SCALE GENOMIC DNA]</scope>
    <source>
        <strain>ATCC BAA-894</strain>
    </source>
</reference>
<evidence type="ECO:0000255" key="1">
    <source>
        <dbReference type="HAMAP-Rule" id="MF_00218"/>
    </source>
</evidence>
<name>DCUP_CROS8</name>
<organism>
    <name type="scientific">Cronobacter sakazakii (strain ATCC BAA-894)</name>
    <name type="common">Enterobacter sakazakii</name>
    <dbReference type="NCBI Taxonomy" id="290339"/>
    <lineage>
        <taxon>Bacteria</taxon>
        <taxon>Pseudomonadati</taxon>
        <taxon>Pseudomonadota</taxon>
        <taxon>Gammaproteobacteria</taxon>
        <taxon>Enterobacterales</taxon>
        <taxon>Enterobacteriaceae</taxon>
        <taxon>Cronobacter</taxon>
    </lineage>
</organism>
<feature type="chain" id="PRO_1000023905" description="Uroporphyrinogen decarboxylase">
    <location>
        <begin position="1"/>
        <end position="354"/>
    </location>
</feature>
<feature type="binding site" evidence="1">
    <location>
        <begin position="27"/>
        <end position="31"/>
    </location>
    <ligand>
        <name>substrate</name>
    </ligand>
</feature>
<feature type="binding site" evidence="1">
    <location>
        <position position="77"/>
    </location>
    <ligand>
        <name>substrate</name>
    </ligand>
</feature>
<feature type="binding site" evidence="1">
    <location>
        <position position="154"/>
    </location>
    <ligand>
        <name>substrate</name>
    </ligand>
</feature>
<feature type="binding site" evidence="1">
    <location>
        <position position="209"/>
    </location>
    <ligand>
        <name>substrate</name>
    </ligand>
</feature>
<feature type="binding site" evidence="1">
    <location>
        <position position="327"/>
    </location>
    <ligand>
        <name>substrate</name>
    </ligand>
</feature>
<feature type="site" description="Transition state stabilizer" evidence="1">
    <location>
        <position position="77"/>
    </location>
</feature>
<keyword id="KW-0963">Cytoplasm</keyword>
<keyword id="KW-0210">Decarboxylase</keyword>
<keyword id="KW-0456">Lyase</keyword>
<keyword id="KW-0627">Porphyrin biosynthesis</keyword>
<keyword id="KW-1185">Reference proteome</keyword>